<reference key="1">
    <citation type="journal article" date="2004" name="Genome Res.">
        <title>The status, quality, and expansion of the NIH full-length cDNA project: the Mammalian Gene Collection (MGC).</title>
        <authorList>
            <consortium name="The MGC Project Team"/>
        </authorList>
    </citation>
    <scope>NUCLEOTIDE SEQUENCE [LARGE SCALE MRNA]</scope>
    <source>
        <strain>C57BL/6J</strain>
        <tissue>Mammary gland</tissue>
    </source>
</reference>
<reference key="2">
    <citation type="journal article" date="2005" name="Science">
        <title>The transcriptional landscape of the mammalian genome.</title>
        <authorList>
            <person name="Carninci P."/>
            <person name="Kasukawa T."/>
            <person name="Katayama S."/>
            <person name="Gough J."/>
            <person name="Frith M.C."/>
            <person name="Maeda N."/>
            <person name="Oyama R."/>
            <person name="Ravasi T."/>
            <person name="Lenhard B."/>
            <person name="Wells C."/>
            <person name="Kodzius R."/>
            <person name="Shimokawa K."/>
            <person name="Bajic V.B."/>
            <person name="Brenner S.E."/>
            <person name="Batalov S."/>
            <person name="Forrest A.R."/>
            <person name="Zavolan M."/>
            <person name="Davis M.J."/>
            <person name="Wilming L.G."/>
            <person name="Aidinis V."/>
            <person name="Allen J.E."/>
            <person name="Ambesi-Impiombato A."/>
            <person name="Apweiler R."/>
            <person name="Aturaliya R.N."/>
            <person name="Bailey T.L."/>
            <person name="Bansal M."/>
            <person name="Baxter L."/>
            <person name="Beisel K.W."/>
            <person name="Bersano T."/>
            <person name="Bono H."/>
            <person name="Chalk A.M."/>
            <person name="Chiu K.P."/>
            <person name="Choudhary V."/>
            <person name="Christoffels A."/>
            <person name="Clutterbuck D.R."/>
            <person name="Crowe M.L."/>
            <person name="Dalla E."/>
            <person name="Dalrymple B.P."/>
            <person name="de Bono B."/>
            <person name="Della Gatta G."/>
            <person name="di Bernardo D."/>
            <person name="Down T."/>
            <person name="Engstrom P."/>
            <person name="Fagiolini M."/>
            <person name="Faulkner G."/>
            <person name="Fletcher C.F."/>
            <person name="Fukushima T."/>
            <person name="Furuno M."/>
            <person name="Futaki S."/>
            <person name="Gariboldi M."/>
            <person name="Georgii-Hemming P."/>
            <person name="Gingeras T.R."/>
            <person name="Gojobori T."/>
            <person name="Green R.E."/>
            <person name="Gustincich S."/>
            <person name="Harbers M."/>
            <person name="Hayashi Y."/>
            <person name="Hensch T.K."/>
            <person name="Hirokawa N."/>
            <person name="Hill D."/>
            <person name="Huminiecki L."/>
            <person name="Iacono M."/>
            <person name="Ikeo K."/>
            <person name="Iwama A."/>
            <person name="Ishikawa T."/>
            <person name="Jakt M."/>
            <person name="Kanapin A."/>
            <person name="Katoh M."/>
            <person name="Kawasawa Y."/>
            <person name="Kelso J."/>
            <person name="Kitamura H."/>
            <person name="Kitano H."/>
            <person name="Kollias G."/>
            <person name="Krishnan S.P."/>
            <person name="Kruger A."/>
            <person name="Kummerfeld S.K."/>
            <person name="Kurochkin I.V."/>
            <person name="Lareau L.F."/>
            <person name="Lazarevic D."/>
            <person name="Lipovich L."/>
            <person name="Liu J."/>
            <person name="Liuni S."/>
            <person name="McWilliam S."/>
            <person name="Madan Babu M."/>
            <person name="Madera M."/>
            <person name="Marchionni L."/>
            <person name="Matsuda H."/>
            <person name="Matsuzawa S."/>
            <person name="Miki H."/>
            <person name="Mignone F."/>
            <person name="Miyake S."/>
            <person name="Morris K."/>
            <person name="Mottagui-Tabar S."/>
            <person name="Mulder N."/>
            <person name="Nakano N."/>
            <person name="Nakauchi H."/>
            <person name="Ng P."/>
            <person name="Nilsson R."/>
            <person name="Nishiguchi S."/>
            <person name="Nishikawa S."/>
            <person name="Nori F."/>
            <person name="Ohara O."/>
            <person name="Okazaki Y."/>
            <person name="Orlando V."/>
            <person name="Pang K.C."/>
            <person name="Pavan W.J."/>
            <person name="Pavesi G."/>
            <person name="Pesole G."/>
            <person name="Petrovsky N."/>
            <person name="Piazza S."/>
            <person name="Reed J."/>
            <person name="Reid J.F."/>
            <person name="Ring B.Z."/>
            <person name="Ringwald M."/>
            <person name="Rost B."/>
            <person name="Ruan Y."/>
            <person name="Salzberg S.L."/>
            <person name="Sandelin A."/>
            <person name="Schneider C."/>
            <person name="Schoenbach C."/>
            <person name="Sekiguchi K."/>
            <person name="Semple C.A."/>
            <person name="Seno S."/>
            <person name="Sessa L."/>
            <person name="Sheng Y."/>
            <person name="Shibata Y."/>
            <person name="Shimada H."/>
            <person name="Shimada K."/>
            <person name="Silva D."/>
            <person name="Sinclair B."/>
            <person name="Sperling S."/>
            <person name="Stupka E."/>
            <person name="Sugiura K."/>
            <person name="Sultana R."/>
            <person name="Takenaka Y."/>
            <person name="Taki K."/>
            <person name="Tammoja K."/>
            <person name="Tan S.L."/>
            <person name="Tang S."/>
            <person name="Taylor M.S."/>
            <person name="Tegner J."/>
            <person name="Teichmann S.A."/>
            <person name="Ueda H.R."/>
            <person name="van Nimwegen E."/>
            <person name="Verardo R."/>
            <person name="Wei C.L."/>
            <person name="Yagi K."/>
            <person name="Yamanishi H."/>
            <person name="Zabarovsky E."/>
            <person name="Zhu S."/>
            <person name="Zimmer A."/>
            <person name="Hide W."/>
            <person name="Bult C."/>
            <person name="Grimmond S.M."/>
            <person name="Teasdale R.D."/>
            <person name="Liu E.T."/>
            <person name="Brusic V."/>
            <person name="Quackenbush J."/>
            <person name="Wahlestedt C."/>
            <person name="Mattick J.S."/>
            <person name="Hume D.A."/>
            <person name="Kai C."/>
            <person name="Sasaki D."/>
            <person name="Tomaru Y."/>
            <person name="Fukuda S."/>
            <person name="Kanamori-Katayama M."/>
            <person name="Suzuki M."/>
            <person name="Aoki J."/>
            <person name="Arakawa T."/>
            <person name="Iida J."/>
            <person name="Imamura K."/>
            <person name="Itoh M."/>
            <person name="Kato T."/>
            <person name="Kawaji H."/>
            <person name="Kawagashira N."/>
            <person name="Kawashima T."/>
            <person name="Kojima M."/>
            <person name="Kondo S."/>
            <person name="Konno H."/>
            <person name="Nakano K."/>
            <person name="Ninomiya N."/>
            <person name="Nishio T."/>
            <person name="Okada M."/>
            <person name="Plessy C."/>
            <person name="Shibata K."/>
            <person name="Shiraki T."/>
            <person name="Suzuki S."/>
            <person name="Tagami M."/>
            <person name="Waki K."/>
            <person name="Watahiki A."/>
            <person name="Okamura-Oho Y."/>
            <person name="Suzuki H."/>
            <person name="Kawai J."/>
            <person name="Hayashizaki Y."/>
        </authorList>
    </citation>
    <scope>NUCLEOTIDE SEQUENCE [LARGE SCALE MRNA] OF 14-136</scope>
    <source>
        <strain>C57BL/6J</strain>
        <tissue>Embryo</tissue>
    </source>
</reference>
<reference key="3">
    <citation type="journal article" date="2006" name="Mol. Cell. Proteomics">
        <title>Comprehensive identification of phosphorylation sites in postsynaptic density preparations.</title>
        <authorList>
            <person name="Trinidad J.C."/>
            <person name="Specht C.G."/>
            <person name="Thalhammer A."/>
            <person name="Schoepfer R."/>
            <person name="Burlingame A.L."/>
        </authorList>
    </citation>
    <scope>IDENTIFICATION BY MASS SPECTROMETRY [LARGE SCALE ANALYSIS]</scope>
    <source>
        <tissue>Brain</tissue>
    </source>
</reference>
<reference key="4">
    <citation type="journal article" date="2010" name="Cell">
        <title>A tissue-specific atlas of mouse protein phosphorylation and expression.</title>
        <authorList>
            <person name="Huttlin E.L."/>
            <person name="Jedrychowski M.P."/>
            <person name="Elias J.E."/>
            <person name="Goswami T."/>
            <person name="Rad R."/>
            <person name="Beausoleil S.A."/>
            <person name="Villen J."/>
            <person name="Haas W."/>
            <person name="Sowa M.E."/>
            <person name="Gygi S.P."/>
        </authorList>
    </citation>
    <scope>IDENTIFICATION BY MASS SPECTROMETRY [LARGE SCALE ANALYSIS]</scope>
    <source>
        <tissue>Brain</tissue>
        <tissue>Brown adipose tissue</tissue>
        <tissue>Heart</tissue>
        <tissue>Kidney</tissue>
        <tissue>Liver</tissue>
        <tissue>Lung</tissue>
        <tissue>Testis</tissue>
    </source>
</reference>
<reference key="5">
    <citation type="journal article" date="2013" name="Mol. Cell">
        <title>SIRT5-mediated lysine desuccinylation impacts diverse metabolic pathways.</title>
        <authorList>
            <person name="Park J."/>
            <person name="Chen Y."/>
            <person name="Tishkoff D.X."/>
            <person name="Peng C."/>
            <person name="Tan M."/>
            <person name="Dai L."/>
            <person name="Xie Z."/>
            <person name="Zhang Y."/>
            <person name="Zwaans B.M."/>
            <person name="Skinner M.E."/>
            <person name="Lombard D.B."/>
            <person name="Zhao Y."/>
        </authorList>
    </citation>
    <scope>ACETYLATION [LARGE SCALE ANALYSIS] AT LYS-131</scope>
    <scope>SUCCINYLATION [LARGE SCALE ANALYSIS] AT LYS-120; LYS-124 AND LYS-131</scope>
    <scope>IDENTIFICATION BY MASS SPECTROMETRY [LARGE SCALE ANALYSIS]</scope>
    <source>
        <tissue>Embryonic fibroblast</tissue>
        <tissue>Liver</tissue>
    </source>
</reference>
<reference key="6">
    <citation type="journal article" date="2013" name="Proc. Natl. Acad. Sci. U.S.A.">
        <title>Label-free quantitative proteomics of the lysine acetylome in mitochondria identifies substrates of SIRT3 in metabolic pathways.</title>
        <authorList>
            <person name="Rardin M.J."/>
            <person name="Newman J.C."/>
            <person name="Held J.M."/>
            <person name="Cusack M.P."/>
            <person name="Sorensen D.J."/>
            <person name="Li B."/>
            <person name="Schilling B."/>
            <person name="Mooney S.D."/>
            <person name="Kahn C.R."/>
            <person name="Verdin E."/>
            <person name="Gibson B.W."/>
        </authorList>
    </citation>
    <scope>ACETYLATION [LARGE SCALE ANALYSIS] AT LYS-120; LYS-124 AND LYS-131</scope>
    <scope>IDENTIFICATION BY MASS SPECTROMETRY [LARGE SCALE ANALYSIS]</scope>
    <source>
        <tissue>Liver</tissue>
    </source>
</reference>
<reference key="7">
    <citation type="journal article" date="2004" name="Biochemistry">
        <title>Biochemical and structural basis for partially redundant enzymatic and transcriptional functions of DCoH and DCoH2.</title>
        <authorList>
            <person name="Rose R.B."/>
            <person name="Pullen K.E."/>
            <person name="Bayle J.H."/>
            <person name="Crabtree G.R."/>
            <person name="Alber T."/>
        </authorList>
    </citation>
    <scope>X-RAY CRYSTALLOGRAPHY (1.6 ANGSTROMS) OF 34-136</scope>
    <scope>SUBUNIT</scope>
    <scope>FUNCTION AS A PHS</scope>
</reference>
<accession>Q9CZL5</accession>
<organism>
    <name type="scientific">Mus musculus</name>
    <name type="common">Mouse</name>
    <dbReference type="NCBI Taxonomy" id="10090"/>
    <lineage>
        <taxon>Eukaryota</taxon>
        <taxon>Metazoa</taxon>
        <taxon>Chordata</taxon>
        <taxon>Craniata</taxon>
        <taxon>Vertebrata</taxon>
        <taxon>Euteleostomi</taxon>
        <taxon>Mammalia</taxon>
        <taxon>Eutheria</taxon>
        <taxon>Euarchontoglires</taxon>
        <taxon>Glires</taxon>
        <taxon>Rodentia</taxon>
        <taxon>Myomorpha</taxon>
        <taxon>Muroidea</taxon>
        <taxon>Muridae</taxon>
        <taxon>Murinae</taxon>
        <taxon>Mus</taxon>
        <taxon>Mus</taxon>
    </lineage>
</organism>
<dbReference type="EC" id="4.2.1.96"/>
<dbReference type="EMBL" id="BC028642">
    <property type="protein sequence ID" value="AAH28642.1"/>
    <property type="status" value="ALT_INIT"/>
    <property type="molecule type" value="mRNA"/>
</dbReference>
<dbReference type="EMBL" id="AK012465">
    <property type="protein sequence ID" value="BAB28260.1"/>
    <property type="status" value="ALT_INIT"/>
    <property type="molecule type" value="mRNA"/>
</dbReference>
<dbReference type="CCDS" id="CCDS26554.1"/>
<dbReference type="RefSeq" id="NP_082557.1">
    <property type="nucleotide sequence ID" value="NM_028281.1"/>
</dbReference>
<dbReference type="PDB" id="1RU0">
    <property type="method" value="X-ray"/>
    <property type="resolution" value="1.60 A"/>
    <property type="chains" value="A/B=36-136"/>
</dbReference>
<dbReference type="PDB" id="4WIL">
    <property type="method" value="X-ray"/>
    <property type="resolution" value="1.36 A"/>
    <property type="chains" value="A/B=34-136"/>
</dbReference>
<dbReference type="PDBsum" id="1RU0"/>
<dbReference type="PDBsum" id="4WIL"/>
<dbReference type="SMR" id="Q9CZL5"/>
<dbReference type="BioGRID" id="215439">
    <property type="interactions" value="4"/>
</dbReference>
<dbReference type="CORUM" id="Q9CZL5"/>
<dbReference type="FunCoup" id="Q9CZL5">
    <property type="interactions" value="1398"/>
</dbReference>
<dbReference type="STRING" id="10090.ENSMUSP00000021958"/>
<dbReference type="GlyGen" id="Q9CZL5">
    <property type="glycosylation" value="1 site, 1 O-linked glycan (1 site)"/>
</dbReference>
<dbReference type="iPTMnet" id="Q9CZL5"/>
<dbReference type="PhosphoSitePlus" id="Q9CZL5"/>
<dbReference type="jPOST" id="Q9CZL5"/>
<dbReference type="PaxDb" id="10090-ENSMUSP00000021958"/>
<dbReference type="PeptideAtlas" id="Q9CZL5"/>
<dbReference type="ProteomicsDB" id="289413"/>
<dbReference type="Pumba" id="Q9CZL5"/>
<dbReference type="Antibodypedia" id="26376">
    <property type="antibodies" value="60 antibodies from 18 providers"/>
</dbReference>
<dbReference type="DNASU" id="72562"/>
<dbReference type="Ensembl" id="ENSMUST00000021958.6">
    <property type="protein sequence ID" value="ENSMUSP00000021958.6"/>
    <property type="gene ID" value="ENSMUSG00000021496.13"/>
</dbReference>
<dbReference type="GeneID" id="72562"/>
<dbReference type="KEGG" id="mmu:72562"/>
<dbReference type="UCSC" id="uc007qrz.1">
    <property type="organism name" value="mouse"/>
</dbReference>
<dbReference type="AGR" id="MGI:1919812"/>
<dbReference type="CTD" id="84105"/>
<dbReference type="MGI" id="MGI:1919812">
    <property type="gene designation" value="Pcbd2"/>
</dbReference>
<dbReference type="VEuPathDB" id="HostDB:ENSMUSG00000021496"/>
<dbReference type="eggNOG" id="KOG4073">
    <property type="taxonomic scope" value="Eukaryota"/>
</dbReference>
<dbReference type="GeneTree" id="ENSGT00390000007221"/>
<dbReference type="HOGENOM" id="CLU_081974_3_1_1"/>
<dbReference type="InParanoid" id="Q9CZL5"/>
<dbReference type="OrthoDB" id="277398at2759"/>
<dbReference type="PhylomeDB" id="Q9CZL5"/>
<dbReference type="TreeFam" id="TF300188"/>
<dbReference type="BRENDA" id="4.2.1.96">
    <property type="organism ID" value="3474"/>
</dbReference>
<dbReference type="BioGRID-ORCS" id="72562">
    <property type="hits" value="0 hits in 62 CRISPR screens"/>
</dbReference>
<dbReference type="ChiTaRS" id="Pcbd2">
    <property type="organism name" value="mouse"/>
</dbReference>
<dbReference type="EvolutionaryTrace" id="Q9CZL5"/>
<dbReference type="PRO" id="PR:Q9CZL5"/>
<dbReference type="Proteomes" id="UP000000589">
    <property type="component" value="Chromosome 13"/>
</dbReference>
<dbReference type="RNAct" id="Q9CZL5">
    <property type="molecule type" value="protein"/>
</dbReference>
<dbReference type="Bgee" id="ENSMUSG00000021496">
    <property type="expression patterns" value="Expressed in renal corpuscle and 263 other cell types or tissues"/>
</dbReference>
<dbReference type="ExpressionAtlas" id="Q9CZL5">
    <property type="expression patterns" value="baseline and differential"/>
</dbReference>
<dbReference type="GO" id="GO:0005739">
    <property type="term" value="C:mitochondrion"/>
    <property type="evidence" value="ECO:0007005"/>
    <property type="project" value="MGI"/>
</dbReference>
<dbReference type="GO" id="GO:0005634">
    <property type="term" value="C:nucleus"/>
    <property type="evidence" value="ECO:0000353"/>
    <property type="project" value="MGI"/>
</dbReference>
<dbReference type="GO" id="GO:0008124">
    <property type="term" value="F:4-alpha-hydroxytetrahydrobiopterin dehydratase activity"/>
    <property type="evidence" value="ECO:0007669"/>
    <property type="project" value="UniProtKB-EC"/>
</dbReference>
<dbReference type="GO" id="GO:0042802">
    <property type="term" value="F:identical protein binding"/>
    <property type="evidence" value="ECO:0000353"/>
    <property type="project" value="MGI"/>
</dbReference>
<dbReference type="GO" id="GO:0004505">
    <property type="term" value="F:phenylalanine 4-monooxygenase activity"/>
    <property type="evidence" value="ECO:0000314"/>
    <property type="project" value="MGI"/>
</dbReference>
<dbReference type="GO" id="GO:0006729">
    <property type="term" value="P:tetrahydrobiopterin biosynthetic process"/>
    <property type="evidence" value="ECO:0007669"/>
    <property type="project" value="UniProtKB-KW"/>
</dbReference>
<dbReference type="CDD" id="cd00914">
    <property type="entry name" value="PCD_DCoH_subfamily_b"/>
    <property type="match status" value="1"/>
</dbReference>
<dbReference type="FunFam" id="3.30.1360.20:FF:000001">
    <property type="entry name" value="Pterin-4-alpha-carbinolamine dehydratase 2"/>
    <property type="match status" value="1"/>
</dbReference>
<dbReference type="Gene3D" id="3.30.1360.20">
    <property type="entry name" value="Transcriptional coactivator/pterin dehydratase"/>
    <property type="match status" value="1"/>
</dbReference>
<dbReference type="HAMAP" id="MF_00434">
    <property type="entry name" value="Pterin_4_alpha"/>
    <property type="match status" value="1"/>
</dbReference>
<dbReference type="InterPro" id="IPR036428">
    <property type="entry name" value="PCD_sf"/>
</dbReference>
<dbReference type="InterPro" id="IPR001533">
    <property type="entry name" value="Pterin_deHydtase"/>
</dbReference>
<dbReference type="NCBIfam" id="NF002018">
    <property type="entry name" value="PRK00823.1-3"/>
    <property type="match status" value="1"/>
</dbReference>
<dbReference type="NCBIfam" id="NF002020">
    <property type="entry name" value="PRK00823.1-5"/>
    <property type="match status" value="1"/>
</dbReference>
<dbReference type="PANTHER" id="PTHR12599">
    <property type="entry name" value="PTERIN-4-ALPHA-CARBINOLAMINE DEHYDRATASE"/>
    <property type="match status" value="1"/>
</dbReference>
<dbReference type="PANTHER" id="PTHR12599:SF15">
    <property type="entry name" value="PTERIN-4-ALPHA-CARBINOLAMINE DEHYDRATASE 2"/>
    <property type="match status" value="1"/>
</dbReference>
<dbReference type="Pfam" id="PF01329">
    <property type="entry name" value="Pterin_4a"/>
    <property type="match status" value="1"/>
</dbReference>
<dbReference type="SUPFAM" id="SSF55248">
    <property type="entry name" value="PCD-like"/>
    <property type="match status" value="1"/>
</dbReference>
<protein>
    <recommendedName>
        <fullName>Pterin-4-alpha-carbinolamine dehydratase 2</fullName>
        <shortName>PHS 2</shortName>
        <ecNumber>4.2.1.96</ecNumber>
    </recommendedName>
    <alternativeName>
        <fullName>4-alpha-hydroxy-tetrahydropterin dehydratase 2</fullName>
    </alternativeName>
    <alternativeName>
        <fullName>DcoH-like protein DCoHm</fullName>
    </alternativeName>
    <alternativeName>
        <fullName>Dimerization cofactor of hepatocyte nuclear factor 1 from muscle</fullName>
    </alternativeName>
    <alternativeName>
        <fullName>HNF-1-alpha dimerization cofactor</fullName>
    </alternativeName>
</protein>
<comment type="function">
    <text evidence="1">Involved in tetrahydrobiopterin biosynthesis. Seems to both prevent the formation of 7-pterins and accelerate the formation of quinonoid-BH2 (By similarity).</text>
</comment>
<comment type="function">
    <text evidence="2">Regulates the dimerization of homeodomain protein HNF-1-alpha and enhances its transcriptional activity.</text>
</comment>
<comment type="catalytic activity">
    <reaction>
        <text>(4aS,6R)-4a-hydroxy-L-erythro-5,6,7,8-tetrahydrobiopterin = (6R)-L-erythro-6,7-dihydrobiopterin + H2O</text>
        <dbReference type="Rhea" id="RHEA:11920"/>
        <dbReference type="ChEBI" id="CHEBI:15377"/>
        <dbReference type="ChEBI" id="CHEBI:15642"/>
        <dbReference type="ChEBI" id="CHEBI:43120"/>
        <dbReference type="EC" id="4.2.1.96"/>
    </reaction>
</comment>
<comment type="subunit">
    <text evidence="1">Homotetramer. Interacts with DYRK1B (By similarity).</text>
</comment>
<comment type="similarity">
    <text evidence="3">Belongs to the pterin-4-alpha-carbinolamine dehydratase family.</text>
</comment>
<comment type="sequence caution" evidence="3">
    <conflict type="erroneous initiation">
        <sequence resource="EMBL-CDS" id="AAH28642"/>
    </conflict>
</comment>
<comment type="sequence caution" evidence="3">
    <conflict type="erroneous initiation">
        <sequence resource="EMBL-CDS" id="BAB28260"/>
    </conflict>
</comment>
<gene>
    <name type="primary">Pcbd2</name>
    <name type="synonym">Dcoh2</name>
    <name type="synonym">Dcohm</name>
</gene>
<feature type="chain" id="PRO_0000063058" description="Pterin-4-alpha-carbinolamine dehydratase 2">
    <location>
        <begin position="1"/>
        <end position="136"/>
    </location>
</feature>
<feature type="modified residue" description="N6-acetyllysine; alternate" evidence="4">
    <location>
        <position position="120"/>
    </location>
</feature>
<feature type="modified residue" description="N6-succinyllysine; alternate" evidence="5">
    <location>
        <position position="120"/>
    </location>
</feature>
<feature type="modified residue" description="N6-acetyllysine; alternate" evidence="4">
    <location>
        <position position="124"/>
    </location>
</feature>
<feature type="modified residue" description="N6-succinyllysine; alternate" evidence="5">
    <location>
        <position position="124"/>
    </location>
</feature>
<feature type="modified residue" description="N6-acetyllysine; alternate" evidence="4 5">
    <location>
        <position position="131"/>
    </location>
</feature>
<feature type="modified residue" description="N6-succinyllysine; alternate" evidence="5">
    <location>
        <position position="131"/>
    </location>
</feature>
<feature type="helix" evidence="6">
    <location>
        <begin position="43"/>
        <end position="55"/>
    </location>
</feature>
<feature type="strand" evidence="6">
    <location>
        <begin position="62"/>
        <end position="65"/>
    </location>
</feature>
<feature type="strand" evidence="6">
    <location>
        <begin position="67"/>
        <end position="72"/>
    </location>
</feature>
<feature type="helix" evidence="6">
    <location>
        <begin position="76"/>
        <end position="93"/>
    </location>
</feature>
<feature type="strand" evidence="6">
    <location>
        <begin position="98"/>
        <end position="102"/>
    </location>
</feature>
<feature type="strand" evidence="6">
    <location>
        <begin position="105"/>
        <end position="110"/>
    </location>
</feature>
<feature type="turn" evidence="6">
    <location>
        <begin position="113"/>
        <end position="116"/>
    </location>
</feature>
<feature type="helix" evidence="6">
    <location>
        <begin position="120"/>
        <end position="133"/>
    </location>
</feature>
<evidence type="ECO:0000250" key="1"/>
<evidence type="ECO:0000269" key="2">
    <source>
    </source>
</evidence>
<evidence type="ECO:0000305" key="3"/>
<evidence type="ECO:0007744" key="4">
    <source>
    </source>
</evidence>
<evidence type="ECO:0007744" key="5">
    <source>
    </source>
</evidence>
<evidence type="ECO:0007829" key="6">
    <source>
        <dbReference type="PDB" id="4WIL"/>
    </source>
</evidence>
<sequence length="136" mass="14830">MVAAAAVAVAAVGARSAGRWLAALRSPGASRAAMSSDAQWLTAEERDQLIPGLKAAGWSELSERDAIYKEFSFKNFNQAFGFMSRVALQAEKMNHHPEWFNVYNKVQITLTSHDCGGLTKRDVKLAQFIEKAAASL</sequence>
<name>PHS2_MOUSE</name>
<keyword id="KW-0002">3D-structure</keyword>
<keyword id="KW-0007">Acetylation</keyword>
<keyword id="KW-0456">Lyase</keyword>
<keyword id="KW-1185">Reference proteome</keyword>
<keyword id="KW-0783">Tetrahydrobiopterin biosynthesis</keyword>
<proteinExistence type="evidence at protein level"/>